<sequence length="33" mass="3584">MATLDFTTKPLALVIYMSVVLLLMVGVPLLFSS</sequence>
<organism>
    <name type="scientific">Saccharomyces cerevisiae (strain ATCC 204508 / S288c)</name>
    <name type="common">Baker's yeast</name>
    <dbReference type="NCBI Taxonomy" id="559292"/>
    <lineage>
        <taxon>Eukaryota</taxon>
        <taxon>Fungi</taxon>
        <taxon>Dikarya</taxon>
        <taxon>Ascomycota</taxon>
        <taxon>Saccharomycotina</taxon>
        <taxon>Saccharomycetes</taxon>
        <taxon>Saccharomycetales</taxon>
        <taxon>Saccharomycetaceae</taxon>
        <taxon>Saccharomyces</taxon>
    </lineage>
</organism>
<keyword id="KW-0472">Membrane</keyword>
<keyword id="KW-1185">Reference proteome</keyword>
<keyword id="KW-0812">Transmembrane</keyword>
<keyword id="KW-1133">Transmembrane helix</keyword>
<name>YP159_YEAST</name>
<comment type="subcellular location">
    <subcellularLocation>
        <location evidence="2">Membrane</location>
        <topology evidence="2">Single-pass membrane protein</topology>
    </subcellularLocation>
</comment>
<dbReference type="EMBL" id="U28371">
    <property type="status" value="NOT_ANNOTATED_CDS"/>
    <property type="molecule type" value="Genomic_DNA"/>
</dbReference>
<dbReference type="EMBL" id="AF479931">
    <property type="protein sequence ID" value="AAL79244.1"/>
    <property type="molecule type" value="Genomic_DNA"/>
</dbReference>
<dbReference type="EMBL" id="BK006949">
    <property type="protein sequence ID" value="DAA11576.1"/>
    <property type="molecule type" value="Genomic_DNA"/>
</dbReference>
<dbReference type="RefSeq" id="NP_878184.1">
    <property type="nucleotide sequence ID" value="NM_001184628.1"/>
</dbReference>
<dbReference type="BioGRID" id="37065">
    <property type="interactions" value="118"/>
</dbReference>
<dbReference type="FunCoup" id="Q8TGQ7">
    <property type="interactions" value="24"/>
</dbReference>
<dbReference type="IntAct" id="Q8TGQ7">
    <property type="interactions" value="4"/>
</dbReference>
<dbReference type="STRING" id="4932.YPR159C-A"/>
<dbReference type="PaxDb" id="4932-YPR159C-A"/>
<dbReference type="EnsemblFungi" id="YPR159C-A_mRNA">
    <property type="protein sequence ID" value="YPR159C-A"/>
    <property type="gene ID" value="YPR159C-A"/>
</dbReference>
<dbReference type="GeneID" id="1466523"/>
<dbReference type="KEGG" id="sce:YPR159C-A"/>
<dbReference type="AGR" id="SGD:S000028725"/>
<dbReference type="SGD" id="S000028725">
    <property type="gene designation" value="YPR159C-A"/>
</dbReference>
<dbReference type="VEuPathDB" id="FungiDB:YPR159C-A"/>
<dbReference type="HOGENOM" id="CLU_3385030_0_0_1"/>
<dbReference type="InParanoid" id="Q8TGQ7"/>
<dbReference type="BioCyc" id="YEAST:G3O-34367-MONOMER"/>
<dbReference type="PRO" id="PR:Q8TGQ7"/>
<dbReference type="Proteomes" id="UP000002311">
    <property type="component" value="Chromosome XVI"/>
</dbReference>
<dbReference type="GO" id="GO:0005829">
    <property type="term" value="C:cytosol"/>
    <property type="evidence" value="ECO:0007005"/>
    <property type="project" value="SGD"/>
</dbReference>
<dbReference type="GO" id="GO:0016020">
    <property type="term" value="C:membrane"/>
    <property type="evidence" value="ECO:0007669"/>
    <property type="project" value="UniProtKB-SubCell"/>
</dbReference>
<reference key="1">
    <citation type="journal article" date="1997" name="Nature">
        <title>The nucleotide sequence of Saccharomyces cerevisiae chromosome XVI.</title>
        <authorList>
            <person name="Bussey H."/>
            <person name="Storms R.K."/>
            <person name="Ahmed A."/>
            <person name="Albermann K."/>
            <person name="Allen E."/>
            <person name="Ansorge W."/>
            <person name="Araujo R."/>
            <person name="Aparicio A."/>
            <person name="Barrell B.G."/>
            <person name="Badcock K."/>
            <person name="Benes V."/>
            <person name="Botstein D."/>
            <person name="Bowman S."/>
            <person name="Brueckner M."/>
            <person name="Carpenter J."/>
            <person name="Cherry J.M."/>
            <person name="Chung E."/>
            <person name="Churcher C.M."/>
            <person name="Coster F."/>
            <person name="Davis K."/>
            <person name="Davis R.W."/>
            <person name="Dietrich F.S."/>
            <person name="Delius H."/>
            <person name="DiPaolo T."/>
            <person name="Dubois E."/>
            <person name="Duesterhoeft A."/>
            <person name="Duncan M."/>
            <person name="Floeth M."/>
            <person name="Fortin N."/>
            <person name="Friesen J.D."/>
            <person name="Fritz C."/>
            <person name="Goffeau A."/>
            <person name="Hall J."/>
            <person name="Hebling U."/>
            <person name="Heumann K."/>
            <person name="Hilbert H."/>
            <person name="Hillier L.W."/>
            <person name="Hunicke-Smith S."/>
            <person name="Hyman R.W."/>
            <person name="Johnston M."/>
            <person name="Kalman S."/>
            <person name="Kleine K."/>
            <person name="Komp C."/>
            <person name="Kurdi O."/>
            <person name="Lashkari D."/>
            <person name="Lew H."/>
            <person name="Lin A."/>
            <person name="Lin D."/>
            <person name="Louis E.J."/>
            <person name="Marathe R."/>
            <person name="Messenguy F."/>
            <person name="Mewes H.-W."/>
            <person name="Mirtipati S."/>
            <person name="Moestl D."/>
            <person name="Mueller-Auer S."/>
            <person name="Namath A."/>
            <person name="Nentwich U."/>
            <person name="Oefner P."/>
            <person name="Pearson D."/>
            <person name="Petel F.X."/>
            <person name="Pohl T.M."/>
            <person name="Purnelle B."/>
            <person name="Rajandream M.A."/>
            <person name="Rechmann S."/>
            <person name="Rieger M."/>
            <person name="Riles L."/>
            <person name="Roberts D."/>
            <person name="Schaefer M."/>
            <person name="Scharfe M."/>
            <person name="Scherens B."/>
            <person name="Schramm S."/>
            <person name="Schroeder M."/>
            <person name="Sdicu A.-M."/>
            <person name="Tettelin H."/>
            <person name="Urrestarazu L.A."/>
            <person name="Ushinsky S."/>
            <person name="Vierendeels F."/>
            <person name="Vissers S."/>
            <person name="Voss H."/>
            <person name="Walsh S.V."/>
            <person name="Wambutt R."/>
            <person name="Wang Y."/>
            <person name="Wedler E."/>
            <person name="Wedler H."/>
            <person name="Winnett E."/>
            <person name="Zhong W.-W."/>
            <person name="Zollner A."/>
            <person name="Vo D.H."/>
            <person name="Hani J."/>
        </authorList>
    </citation>
    <scope>NUCLEOTIDE SEQUENCE [LARGE SCALE GENOMIC DNA]</scope>
    <source>
        <strain>ATCC 204508 / S288c</strain>
    </source>
</reference>
<reference key="2">
    <citation type="journal article" date="2014" name="G3 (Bethesda)">
        <title>The reference genome sequence of Saccharomyces cerevisiae: Then and now.</title>
        <authorList>
            <person name="Engel S.R."/>
            <person name="Dietrich F.S."/>
            <person name="Fisk D.G."/>
            <person name="Binkley G."/>
            <person name="Balakrishnan R."/>
            <person name="Costanzo M.C."/>
            <person name="Dwight S.S."/>
            <person name="Hitz B.C."/>
            <person name="Karra K."/>
            <person name="Nash R.S."/>
            <person name="Weng S."/>
            <person name="Wong E.D."/>
            <person name="Lloyd P."/>
            <person name="Skrzypek M.S."/>
            <person name="Miyasato S.R."/>
            <person name="Simison M."/>
            <person name="Cherry J.M."/>
        </authorList>
    </citation>
    <scope>GENOME REANNOTATION</scope>
    <source>
        <strain>ATCC 204508 / S288c</strain>
    </source>
</reference>
<reference key="3">
    <citation type="journal article" date="2002" name="Nat. Biotechnol.">
        <title>An integrated approach for finding overlooked genes in yeast.</title>
        <authorList>
            <person name="Kumar A."/>
            <person name="Harrison P.M."/>
            <person name="Cheung K.-H."/>
            <person name="Lan N."/>
            <person name="Echols N."/>
            <person name="Bertone P."/>
            <person name="Miller P."/>
            <person name="Gerstein M.B."/>
            <person name="Snyder M."/>
        </authorList>
    </citation>
    <scope>NUCLEOTIDE SEQUENCE [GENOMIC DNA]</scope>
</reference>
<feature type="chain" id="PRO_0000244639" description="Uncharacterized protein YPR159C-A">
    <location>
        <begin position="1"/>
        <end position="33"/>
    </location>
</feature>
<feature type="transmembrane region" description="Helical" evidence="1">
    <location>
        <begin position="11"/>
        <end position="31"/>
    </location>
</feature>
<accession>Q8TGQ7</accession>
<accession>D6W4G0</accession>
<gene>
    <name type="ordered locus">YPR159C-A</name>
</gene>
<evidence type="ECO:0000255" key="1"/>
<evidence type="ECO:0000305" key="2"/>
<proteinExistence type="predicted"/>
<protein>
    <recommendedName>
        <fullName>Uncharacterized protein YPR159C-A</fullName>
    </recommendedName>
</protein>